<organism>
    <name type="scientific">Rhodopseudomonas palustris (strain BisA53)</name>
    <dbReference type="NCBI Taxonomy" id="316055"/>
    <lineage>
        <taxon>Bacteria</taxon>
        <taxon>Pseudomonadati</taxon>
        <taxon>Pseudomonadota</taxon>
        <taxon>Alphaproteobacteria</taxon>
        <taxon>Hyphomicrobiales</taxon>
        <taxon>Nitrobacteraceae</taxon>
        <taxon>Rhodopseudomonas</taxon>
    </lineage>
</organism>
<gene>
    <name evidence="1" type="primary">glmU</name>
    <name type="ordered locus">RPE_2785</name>
</gene>
<name>GLMU_RHOP5</name>
<protein>
    <recommendedName>
        <fullName evidence="1">Bifunctional protein GlmU</fullName>
    </recommendedName>
    <domain>
        <recommendedName>
            <fullName evidence="1">UDP-N-acetylglucosamine pyrophosphorylase</fullName>
            <ecNumber evidence="1">2.7.7.23</ecNumber>
        </recommendedName>
        <alternativeName>
            <fullName evidence="1">N-acetylglucosamine-1-phosphate uridyltransferase</fullName>
        </alternativeName>
    </domain>
    <domain>
        <recommendedName>
            <fullName evidence="1">Glucosamine-1-phosphate N-acetyltransferase</fullName>
            <ecNumber evidence="1">2.3.1.157</ecNumber>
        </recommendedName>
    </domain>
</protein>
<accession>Q07MW2</accession>
<keyword id="KW-0012">Acyltransferase</keyword>
<keyword id="KW-0133">Cell shape</keyword>
<keyword id="KW-0961">Cell wall biogenesis/degradation</keyword>
<keyword id="KW-0963">Cytoplasm</keyword>
<keyword id="KW-0460">Magnesium</keyword>
<keyword id="KW-0479">Metal-binding</keyword>
<keyword id="KW-0511">Multifunctional enzyme</keyword>
<keyword id="KW-0548">Nucleotidyltransferase</keyword>
<keyword id="KW-0573">Peptidoglycan synthesis</keyword>
<keyword id="KW-0677">Repeat</keyword>
<keyword id="KW-0808">Transferase</keyword>
<dbReference type="EC" id="2.7.7.23" evidence="1"/>
<dbReference type="EC" id="2.3.1.157" evidence="1"/>
<dbReference type="EMBL" id="CP000463">
    <property type="protein sequence ID" value="ABJ06722.1"/>
    <property type="molecule type" value="Genomic_DNA"/>
</dbReference>
<dbReference type="SMR" id="Q07MW2"/>
<dbReference type="STRING" id="316055.RPE_2785"/>
<dbReference type="KEGG" id="rpe:RPE_2785"/>
<dbReference type="eggNOG" id="COG1207">
    <property type="taxonomic scope" value="Bacteria"/>
</dbReference>
<dbReference type="HOGENOM" id="CLU_029499_15_2_5"/>
<dbReference type="OrthoDB" id="9775031at2"/>
<dbReference type="UniPathway" id="UPA00113">
    <property type="reaction ID" value="UER00532"/>
</dbReference>
<dbReference type="UniPathway" id="UPA00113">
    <property type="reaction ID" value="UER00533"/>
</dbReference>
<dbReference type="UniPathway" id="UPA00973"/>
<dbReference type="GO" id="GO:0005737">
    <property type="term" value="C:cytoplasm"/>
    <property type="evidence" value="ECO:0007669"/>
    <property type="project" value="UniProtKB-SubCell"/>
</dbReference>
<dbReference type="GO" id="GO:0016020">
    <property type="term" value="C:membrane"/>
    <property type="evidence" value="ECO:0007669"/>
    <property type="project" value="GOC"/>
</dbReference>
<dbReference type="GO" id="GO:0019134">
    <property type="term" value="F:glucosamine-1-phosphate N-acetyltransferase activity"/>
    <property type="evidence" value="ECO:0007669"/>
    <property type="project" value="UniProtKB-UniRule"/>
</dbReference>
<dbReference type="GO" id="GO:0000287">
    <property type="term" value="F:magnesium ion binding"/>
    <property type="evidence" value="ECO:0007669"/>
    <property type="project" value="UniProtKB-UniRule"/>
</dbReference>
<dbReference type="GO" id="GO:0003977">
    <property type="term" value="F:UDP-N-acetylglucosamine diphosphorylase activity"/>
    <property type="evidence" value="ECO:0007669"/>
    <property type="project" value="UniProtKB-UniRule"/>
</dbReference>
<dbReference type="GO" id="GO:0000902">
    <property type="term" value="P:cell morphogenesis"/>
    <property type="evidence" value="ECO:0007669"/>
    <property type="project" value="UniProtKB-UniRule"/>
</dbReference>
<dbReference type="GO" id="GO:0071555">
    <property type="term" value="P:cell wall organization"/>
    <property type="evidence" value="ECO:0007669"/>
    <property type="project" value="UniProtKB-KW"/>
</dbReference>
<dbReference type="GO" id="GO:0009245">
    <property type="term" value="P:lipid A biosynthetic process"/>
    <property type="evidence" value="ECO:0007669"/>
    <property type="project" value="UniProtKB-UniRule"/>
</dbReference>
<dbReference type="GO" id="GO:0009252">
    <property type="term" value="P:peptidoglycan biosynthetic process"/>
    <property type="evidence" value="ECO:0007669"/>
    <property type="project" value="UniProtKB-UniRule"/>
</dbReference>
<dbReference type="GO" id="GO:0008360">
    <property type="term" value="P:regulation of cell shape"/>
    <property type="evidence" value="ECO:0007669"/>
    <property type="project" value="UniProtKB-KW"/>
</dbReference>
<dbReference type="GO" id="GO:0006048">
    <property type="term" value="P:UDP-N-acetylglucosamine biosynthetic process"/>
    <property type="evidence" value="ECO:0007669"/>
    <property type="project" value="UniProtKB-UniPathway"/>
</dbReference>
<dbReference type="CDD" id="cd02540">
    <property type="entry name" value="GT2_GlmU_N_bac"/>
    <property type="match status" value="1"/>
</dbReference>
<dbReference type="CDD" id="cd03353">
    <property type="entry name" value="LbH_GlmU_C"/>
    <property type="match status" value="1"/>
</dbReference>
<dbReference type="Gene3D" id="2.160.10.10">
    <property type="entry name" value="Hexapeptide repeat proteins"/>
    <property type="match status" value="1"/>
</dbReference>
<dbReference type="Gene3D" id="3.90.550.10">
    <property type="entry name" value="Spore Coat Polysaccharide Biosynthesis Protein SpsA, Chain A"/>
    <property type="match status" value="1"/>
</dbReference>
<dbReference type="HAMAP" id="MF_01631">
    <property type="entry name" value="GlmU"/>
    <property type="match status" value="1"/>
</dbReference>
<dbReference type="InterPro" id="IPR005882">
    <property type="entry name" value="Bifunctional_GlmU"/>
</dbReference>
<dbReference type="InterPro" id="IPR050065">
    <property type="entry name" value="GlmU-like"/>
</dbReference>
<dbReference type="InterPro" id="IPR038009">
    <property type="entry name" value="GlmU_C_LbH"/>
</dbReference>
<dbReference type="InterPro" id="IPR001451">
    <property type="entry name" value="Hexapep"/>
</dbReference>
<dbReference type="InterPro" id="IPR018357">
    <property type="entry name" value="Hexapep_transf_CS"/>
</dbReference>
<dbReference type="InterPro" id="IPR025877">
    <property type="entry name" value="MobA-like_NTP_Trfase"/>
</dbReference>
<dbReference type="InterPro" id="IPR029044">
    <property type="entry name" value="Nucleotide-diphossugar_trans"/>
</dbReference>
<dbReference type="InterPro" id="IPR011004">
    <property type="entry name" value="Trimer_LpxA-like_sf"/>
</dbReference>
<dbReference type="NCBIfam" id="TIGR01173">
    <property type="entry name" value="glmU"/>
    <property type="match status" value="1"/>
</dbReference>
<dbReference type="NCBIfam" id="NF010933">
    <property type="entry name" value="PRK14353.1"/>
    <property type="match status" value="1"/>
</dbReference>
<dbReference type="PANTHER" id="PTHR43584:SF3">
    <property type="entry name" value="BIFUNCTIONAL PROTEIN GLMU"/>
    <property type="match status" value="1"/>
</dbReference>
<dbReference type="PANTHER" id="PTHR43584">
    <property type="entry name" value="NUCLEOTIDYL TRANSFERASE"/>
    <property type="match status" value="1"/>
</dbReference>
<dbReference type="Pfam" id="PF00132">
    <property type="entry name" value="Hexapep"/>
    <property type="match status" value="3"/>
</dbReference>
<dbReference type="Pfam" id="PF12804">
    <property type="entry name" value="NTP_transf_3"/>
    <property type="match status" value="1"/>
</dbReference>
<dbReference type="SUPFAM" id="SSF53448">
    <property type="entry name" value="Nucleotide-diphospho-sugar transferases"/>
    <property type="match status" value="1"/>
</dbReference>
<dbReference type="SUPFAM" id="SSF51161">
    <property type="entry name" value="Trimeric LpxA-like enzymes"/>
    <property type="match status" value="1"/>
</dbReference>
<dbReference type="PROSITE" id="PS00101">
    <property type="entry name" value="HEXAPEP_TRANSFERASES"/>
    <property type="match status" value="1"/>
</dbReference>
<evidence type="ECO:0000255" key="1">
    <source>
        <dbReference type="HAMAP-Rule" id="MF_01631"/>
    </source>
</evidence>
<comment type="function">
    <text evidence="1">Catalyzes the last two sequential reactions in the de novo biosynthetic pathway for UDP-N-acetylglucosamine (UDP-GlcNAc). The C-terminal domain catalyzes the transfer of acetyl group from acetyl coenzyme A to glucosamine-1-phosphate (GlcN-1-P) to produce N-acetylglucosamine-1-phosphate (GlcNAc-1-P), which is converted into UDP-GlcNAc by the transfer of uridine 5-monophosphate (from uridine 5-triphosphate), a reaction catalyzed by the N-terminal domain.</text>
</comment>
<comment type="catalytic activity">
    <reaction evidence="1">
        <text>alpha-D-glucosamine 1-phosphate + acetyl-CoA = N-acetyl-alpha-D-glucosamine 1-phosphate + CoA + H(+)</text>
        <dbReference type="Rhea" id="RHEA:13725"/>
        <dbReference type="ChEBI" id="CHEBI:15378"/>
        <dbReference type="ChEBI" id="CHEBI:57287"/>
        <dbReference type="ChEBI" id="CHEBI:57288"/>
        <dbReference type="ChEBI" id="CHEBI:57776"/>
        <dbReference type="ChEBI" id="CHEBI:58516"/>
        <dbReference type="EC" id="2.3.1.157"/>
    </reaction>
</comment>
<comment type="catalytic activity">
    <reaction evidence="1">
        <text>N-acetyl-alpha-D-glucosamine 1-phosphate + UTP + H(+) = UDP-N-acetyl-alpha-D-glucosamine + diphosphate</text>
        <dbReference type="Rhea" id="RHEA:13509"/>
        <dbReference type="ChEBI" id="CHEBI:15378"/>
        <dbReference type="ChEBI" id="CHEBI:33019"/>
        <dbReference type="ChEBI" id="CHEBI:46398"/>
        <dbReference type="ChEBI" id="CHEBI:57705"/>
        <dbReference type="ChEBI" id="CHEBI:57776"/>
        <dbReference type="EC" id="2.7.7.23"/>
    </reaction>
</comment>
<comment type="cofactor">
    <cofactor evidence="1">
        <name>Mg(2+)</name>
        <dbReference type="ChEBI" id="CHEBI:18420"/>
    </cofactor>
    <text evidence="1">Binds 1 Mg(2+) ion per subunit.</text>
</comment>
<comment type="pathway">
    <text evidence="1">Nucleotide-sugar biosynthesis; UDP-N-acetyl-alpha-D-glucosamine biosynthesis; N-acetyl-alpha-D-glucosamine 1-phosphate from alpha-D-glucosamine 6-phosphate (route II): step 2/2.</text>
</comment>
<comment type="pathway">
    <text evidence="1">Nucleotide-sugar biosynthesis; UDP-N-acetyl-alpha-D-glucosamine biosynthesis; UDP-N-acetyl-alpha-D-glucosamine from N-acetyl-alpha-D-glucosamine 1-phosphate: step 1/1.</text>
</comment>
<comment type="pathway">
    <text evidence="1">Bacterial outer membrane biogenesis; LPS lipid A biosynthesis.</text>
</comment>
<comment type="subunit">
    <text evidence="1">Homotrimer.</text>
</comment>
<comment type="subcellular location">
    <subcellularLocation>
        <location evidence="1">Cytoplasm</location>
    </subcellularLocation>
</comment>
<comment type="similarity">
    <text evidence="1">In the N-terminal section; belongs to the N-acetylglucosamine-1-phosphate uridyltransferase family.</text>
</comment>
<comment type="similarity">
    <text evidence="1">In the C-terminal section; belongs to the transferase hexapeptide repeat family.</text>
</comment>
<reference key="1">
    <citation type="submission" date="2006-09" db="EMBL/GenBank/DDBJ databases">
        <title>Complete sequence of Rhodopseudomonas palustris BisA53.</title>
        <authorList>
            <consortium name="US DOE Joint Genome Institute"/>
            <person name="Copeland A."/>
            <person name="Lucas S."/>
            <person name="Lapidus A."/>
            <person name="Barry K."/>
            <person name="Detter J.C."/>
            <person name="Glavina del Rio T."/>
            <person name="Hammon N."/>
            <person name="Israni S."/>
            <person name="Dalin E."/>
            <person name="Tice H."/>
            <person name="Pitluck S."/>
            <person name="Chain P."/>
            <person name="Malfatti S."/>
            <person name="Shin M."/>
            <person name="Vergez L."/>
            <person name="Schmutz J."/>
            <person name="Larimer F."/>
            <person name="Land M."/>
            <person name="Hauser L."/>
            <person name="Pelletier D.A."/>
            <person name="Kyrpides N."/>
            <person name="Kim E."/>
            <person name="Harwood C.S."/>
            <person name="Oda Y."/>
            <person name="Richardson P."/>
        </authorList>
    </citation>
    <scope>NUCLEOTIDE SEQUENCE [LARGE SCALE GENOMIC DNA]</scope>
    <source>
        <strain>BisA53</strain>
    </source>
</reference>
<proteinExistence type="inferred from homology"/>
<feature type="chain" id="PRO_1000056192" description="Bifunctional protein GlmU">
    <location>
        <begin position="1"/>
        <end position="452"/>
    </location>
</feature>
<feature type="region of interest" description="Pyrophosphorylase" evidence="1">
    <location>
        <begin position="1"/>
        <end position="232"/>
    </location>
</feature>
<feature type="region of interest" description="Linker" evidence="1">
    <location>
        <begin position="233"/>
        <end position="253"/>
    </location>
</feature>
<feature type="region of interest" description="N-acetyltransferase" evidence="1">
    <location>
        <begin position="254"/>
        <end position="452"/>
    </location>
</feature>
<feature type="active site" description="Proton acceptor" evidence="1">
    <location>
        <position position="349"/>
    </location>
</feature>
<feature type="binding site" evidence="1">
    <location>
        <begin position="11"/>
        <end position="14"/>
    </location>
    <ligand>
        <name>UDP-N-acetyl-alpha-D-glucosamine</name>
        <dbReference type="ChEBI" id="CHEBI:57705"/>
    </ligand>
</feature>
<feature type="binding site" evidence="1">
    <location>
        <position position="25"/>
    </location>
    <ligand>
        <name>UDP-N-acetyl-alpha-D-glucosamine</name>
        <dbReference type="ChEBI" id="CHEBI:57705"/>
    </ligand>
</feature>
<feature type="binding site" evidence="1">
    <location>
        <position position="78"/>
    </location>
    <ligand>
        <name>UDP-N-acetyl-alpha-D-glucosamine</name>
        <dbReference type="ChEBI" id="CHEBI:57705"/>
    </ligand>
</feature>
<feature type="binding site" evidence="1">
    <location>
        <begin position="83"/>
        <end position="84"/>
    </location>
    <ligand>
        <name>UDP-N-acetyl-alpha-D-glucosamine</name>
        <dbReference type="ChEBI" id="CHEBI:57705"/>
    </ligand>
</feature>
<feature type="binding site" evidence="1">
    <location>
        <position position="108"/>
    </location>
    <ligand>
        <name>Mg(2+)</name>
        <dbReference type="ChEBI" id="CHEBI:18420"/>
    </ligand>
</feature>
<feature type="binding site" evidence="1">
    <location>
        <position position="144"/>
    </location>
    <ligand>
        <name>UDP-N-acetyl-alpha-D-glucosamine</name>
        <dbReference type="ChEBI" id="CHEBI:57705"/>
    </ligand>
</feature>
<feature type="binding site" evidence="1">
    <location>
        <position position="158"/>
    </location>
    <ligand>
        <name>UDP-N-acetyl-alpha-D-glucosamine</name>
        <dbReference type="ChEBI" id="CHEBI:57705"/>
    </ligand>
</feature>
<feature type="binding site" evidence="1">
    <location>
        <position position="173"/>
    </location>
    <ligand>
        <name>UDP-N-acetyl-alpha-D-glucosamine</name>
        <dbReference type="ChEBI" id="CHEBI:57705"/>
    </ligand>
</feature>
<feature type="binding site" evidence="1">
    <location>
        <position position="230"/>
    </location>
    <ligand>
        <name>Mg(2+)</name>
        <dbReference type="ChEBI" id="CHEBI:18420"/>
    </ligand>
</feature>
<feature type="binding site" evidence="1">
    <location>
        <position position="230"/>
    </location>
    <ligand>
        <name>UDP-N-acetyl-alpha-D-glucosamine</name>
        <dbReference type="ChEBI" id="CHEBI:57705"/>
    </ligand>
</feature>
<feature type="binding site" evidence="1">
    <location>
        <position position="319"/>
    </location>
    <ligand>
        <name>UDP-N-acetyl-alpha-D-glucosamine</name>
        <dbReference type="ChEBI" id="CHEBI:57705"/>
    </ligand>
</feature>
<feature type="binding site" evidence="1">
    <location>
        <position position="337"/>
    </location>
    <ligand>
        <name>UDP-N-acetyl-alpha-D-glucosamine</name>
        <dbReference type="ChEBI" id="CHEBI:57705"/>
    </ligand>
</feature>
<feature type="binding site" evidence="1">
    <location>
        <position position="352"/>
    </location>
    <ligand>
        <name>UDP-N-acetyl-alpha-D-glucosamine</name>
        <dbReference type="ChEBI" id="CHEBI:57705"/>
    </ligand>
</feature>
<feature type="binding site" evidence="1">
    <location>
        <position position="363"/>
    </location>
    <ligand>
        <name>UDP-N-acetyl-alpha-D-glucosamine</name>
        <dbReference type="ChEBI" id="CHEBI:57705"/>
    </ligand>
</feature>
<feature type="binding site" evidence="1">
    <location>
        <position position="366"/>
    </location>
    <ligand>
        <name>acetyl-CoA</name>
        <dbReference type="ChEBI" id="CHEBI:57288"/>
    </ligand>
</feature>
<feature type="binding site" evidence="1">
    <location>
        <begin position="372"/>
        <end position="373"/>
    </location>
    <ligand>
        <name>acetyl-CoA</name>
        <dbReference type="ChEBI" id="CHEBI:57288"/>
    </ligand>
</feature>
<feature type="binding site" evidence="1">
    <location>
        <position position="391"/>
    </location>
    <ligand>
        <name>acetyl-CoA</name>
        <dbReference type="ChEBI" id="CHEBI:57288"/>
    </ligand>
</feature>
<feature type="binding site" evidence="1">
    <location>
        <position position="409"/>
    </location>
    <ligand>
        <name>acetyl-CoA</name>
        <dbReference type="ChEBI" id="CHEBI:57288"/>
    </ligand>
</feature>
<feature type="binding site" evidence="1">
    <location>
        <position position="426"/>
    </location>
    <ligand>
        <name>acetyl-CoA</name>
        <dbReference type="ChEBI" id="CHEBI:57288"/>
    </ligand>
</feature>
<sequence length="452" mass="46825">MTSRTSLTIVLAAGEGTRMRSSLPKVLHQVAGETLLAHVLKAAPEGDGAALAVVIGPDHQAVAEEVGRVRPQATTYVQRERLGTAHAVLAAREAIAAGADDLLVAFGDTPLISAATFARLRQPLAQGVALVALGFRPADPTGYGRLLVQNDRLVGIREQADASADERAIGLCNAGVMAIDGKAALRILERIGSANAKGEYYLTDAVAIARELGLEAAVIETSEDEVRGINTKAQLAEAEAVMQARLRQAALDAGVTMIAPETVFLAADTTFGKDVTIEPFVVIGAGVSIGDGAVIHAFSHLVQAKIGKNASVGPYARLRPGTSLGDGAKIGNFVETKAAQIDPGAKVNHLTYIGDAHIGPNANIGAGTITCNYDGFGKHKTEIGAGAFVGSNSSLVAPLKIGAGAYVGSGSVVTRDVPDDALAVERNQQKVSEGWAKRFREAKTRGKTRPAK</sequence>